<organism>
    <name type="scientific">Burkholderia pseudomallei (strain 1710b)</name>
    <dbReference type="NCBI Taxonomy" id="320372"/>
    <lineage>
        <taxon>Bacteria</taxon>
        <taxon>Pseudomonadati</taxon>
        <taxon>Pseudomonadota</taxon>
        <taxon>Betaproteobacteria</taxon>
        <taxon>Burkholderiales</taxon>
        <taxon>Burkholderiaceae</taxon>
        <taxon>Burkholderia</taxon>
        <taxon>pseudomallei group</taxon>
    </lineage>
</organism>
<gene>
    <name evidence="1" type="primary">lipA</name>
    <name type="ordered locus">BURPS1710b_0628</name>
</gene>
<sequence>MTDLTATPAPAEPAASAYDPTAKQKAQAKTARIPIKIVPIEKLKKPEWIRVKAATGSSRFNEIKTILREHNLHTVCEEASCPNIGECFGKGTATFMIMGDKCTRRCPFCDVGHGRPDPLDADEPKNLARTIAALKLKYVVITSVDRDDLRDGGAGHFVECIREVREQSPATRIEILTPDFRGRLDRALAILNAAPPDVMNHNLETVPRLYKEARPGSDYAHSLKLLKDFKALHPDVATKSGLMVGLGETTDEILQVMRDLRAHDVDMLTIGQYLQPSEHHLPVREYVHPDTFKMYEEEAYKMGFTHAAVGAMVRSSYHADLQAHGAGVV</sequence>
<name>LIPA_BURP1</name>
<dbReference type="EC" id="2.8.1.8" evidence="1"/>
<dbReference type="EMBL" id="CP000124">
    <property type="protein sequence ID" value="ABA49561.1"/>
    <property type="molecule type" value="Genomic_DNA"/>
</dbReference>
<dbReference type="RefSeq" id="WP_004522930.1">
    <property type="nucleotide sequence ID" value="NC_007434.1"/>
</dbReference>
<dbReference type="SMR" id="Q3JWL1"/>
<dbReference type="EnsemblBacteria" id="ABA49561">
    <property type="protein sequence ID" value="ABA49561"/>
    <property type="gene ID" value="BURPS1710b_0628"/>
</dbReference>
<dbReference type="GeneID" id="93058932"/>
<dbReference type="KEGG" id="bpm:BURPS1710b_0628"/>
<dbReference type="HOGENOM" id="CLU_033144_2_1_4"/>
<dbReference type="UniPathway" id="UPA00538">
    <property type="reaction ID" value="UER00593"/>
</dbReference>
<dbReference type="Proteomes" id="UP000002700">
    <property type="component" value="Chromosome I"/>
</dbReference>
<dbReference type="GO" id="GO:0005737">
    <property type="term" value="C:cytoplasm"/>
    <property type="evidence" value="ECO:0007669"/>
    <property type="project" value="UniProtKB-SubCell"/>
</dbReference>
<dbReference type="GO" id="GO:0051539">
    <property type="term" value="F:4 iron, 4 sulfur cluster binding"/>
    <property type="evidence" value="ECO:0007669"/>
    <property type="project" value="UniProtKB-UniRule"/>
</dbReference>
<dbReference type="GO" id="GO:0016992">
    <property type="term" value="F:lipoate synthase activity"/>
    <property type="evidence" value="ECO:0007669"/>
    <property type="project" value="UniProtKB-UniRule"/>
</dbReference>
<dbReference type="GO" id="GO:0046872">
    <property type="term" value="F:metal ion binding"/>
    <property type="evidence" value="ECO:0007669"/>
    <property type="project" value="UniProtKB-KW"/>
</dbReference>
<dbReference type="CDD" id="cd01335">
    <property type="entry name" value="Radical_SAM"/>
    <property type="match status" value="1"/>
</dbReference>
<dbReference type="FunFam" id="3.20.20.70:FF:000040">
    <property type="entry name" value="Lipoyl synthase"/>
    <property type="match status" value="1"/>
</dbReference>
<dbReference type="Gene3D" id="3.20.20.70">
    <property type="entry name" value="Aldolase class I"/>
    <property type="match status" value="1"/>
</dbReference>
<dbReference type="HAMAP" id="MF_00206">
    <property type="entry name" value="Lipoyl_synth"/>
    <property type="match status" value="1"/>
</dbReference>
<dbReference type="InterPro" id="IPR013785">
    <property type="entry name" value="Aldolase_TIM"/>
</dbReference>
<dbReference type="InterPro" id="IPR006638">
    <property type="entry name" value="Elp3/MiaA/NifB-like_rSAM"/>
</dbReference>
<dbReference type="InterPro" id="IPR031691">
    <property type="entry name" value="LIAS_N"/>
</dbReference>
<dbReference type="InterPro" id="IPR003698">
    <property type="entry name" value="Lipoyl_synth"/>
</dbReference>
<dbReference type="InterPro" id="IPR007197">
    <property type="entry name" value="rSAM"/>
</dbReference>
<dbReference type="NCBIfam" id="TIGR00510">
    <property type="entry name" value="lipA"/>
    <property type="match status" value="1"/>
</dbReference>
<dbReference type="NCBIfam" id="NF004019">
    <property type="entry name" value="PRK05481.1"/>
    <property type="match status" value="1"/>
</dbReference>
<dbReference type="NCBIfam" id="NF009544">
    <property type="entry name" value="PRK12928.1"/>
    <property type="match status" value="1"/>
</dbReference>
<dbReference type="PANTHER" id="PTHR10949">
    <property type="entry name" value="LIPOYL SYNTHASE"/>
    <property type="match status" value="1"/>
</dbReference>
<dbReference type="PANTHER" id="PTHR10949:SF0">
    <property type="entry name" value="LIPOYL SYNTHASE, MITOCHONDRIAL"/>
    <property type="match status" value="1"/>
</dbReference>
<dbReference type="Pfam" id="PF16881">
    <property type="entry name" value="LIAS_N"/>
    <property type="match status" value="1"/>
</dbReference>
<dbReference type="Pfam" id="PF04055">
    <property type="entry name" value="Radical_SAM"/>
    <property type="match status" value="1"/>
</dbReference>
<dbReference type="PIRSF" id="PIRSF005963">
    <property type="entry name" value="Lipoyl_synth"/>
    <property type="match status" value="1"/>
</dbReference>
<dbReference type="SFLD" id="SFLDF00271">
    <property type="entry name" value="lipoyl_synthase"/>
    <property type="match status" value="1"/>
</dbReference>
<dbReference type="SFLD" id="SFLDS00029">
    <property type="entry name" value="Radical_SAM"/>
    <property type="match status" value="1"/>
</dbReference>
<dbReference type="SMART" id="SM00729">
    <property type="entry name" value="Elp3"/>
    <property type="match status" value="1"/>
</dbReference>
<dbReference type="SUPFAM" id="SSF102114">
    <property type="entry name" value="Radical SAM enzymes"/>
    <property type="match status" value="1"/>
</dbReference>
<dbReference type="PROSITE" id="PS51918">
    <property type="entry name" value="RADICAL_SAM"/>
    <property type="match status" value="1"/>
</dbReference>
<comment type="function">
    <text evidence="1">Catalyzes the radical-mediated insertion of two sulfur atoms into the C-6 and C-8 positions of the octanoyl moiety bound to the lipoyl domains of lipoate-dependent enzymes, thereby converting the octanoylated domains into lipoylated derivatives.</text>
</comment>
<comment type="catalytic activity">
    <reaction evidence="1">
        <text>[[Fe-S] cluster scaffold protein carrying a second [4Fe-4S](2+) cluster] + N(6)-octanoyl-L-lysyl-[protein] + 2 oxidized [2Fe-2S]-[ferredoxin] + 2 S-adenosyl-L-methionine + 4 H(+) = [[Fe-S] cluster scaffold protein] + N(6)-[(R)-dihydrolipoyl]-L-lysyl-[protein] + 4 Fe(3+) + 2 hydrogen sulfide + 2 5'-deoxyadenosine + 2 L-methionine + 2 reduced [2Fe-2S]-[ferredoxin]</text>
        <dbReference type="Rhea" id="RHEA:16585"/>
        <dbReference type="Rhea" id="RHEA-COMP:9928"/>
        <dbReference type="Rhea" id="RHEA-COMP:10000"/>
        <dbReference type="Rhea" id="RHEA-COMP:10001"/>
        <dbReference type="Rhea" id="RHEA-COMP:10475"/>
        <dbReference type="Rhea" id="RHEA-COMP:14568"/>
        <dbReference type="Rhea" id="RHEA-COMP:14569"/>
        <dbReference type="ChEBI" id="CHEBI:15378"/>
        <dbReference type="ChEBI" id="CHEBI:17319"/>
        <dbReference type="ChEBI" id="CHEBI:29034"/>
        <dbReference type="ChEBI" id="CHEBI:29919"/>
        <dbReference type="ChEBI" id="CHEBI:33722"/>
        <dbReference type="ChEBI" id="CHEBI:33737"/>
        <dbReference type="ChEBI" id="CHEBI:33738"/>
        <dbReference type="ChEBI" id="CHEBI:57844"/>
        <dbReference type="ChEBI" id="CHEBI:59789"/>
        <dbReference type="ChEBI" id="CHEBI:78809"/>
        <dbReference type="ChEBI" id="CHEBI:83100"/>
        <dbReference type="EC" id="2.8.1.8"/>
    </reaction>
</comment>
<comment type="cofactor">
    <cofactor evidence="1">
        <name>[4Fe-4S] cluster</name>
        <dbReference type="ChEBI" id="CHEBI:49883"/>
    </cofactor>
    <text evidence="1">Binds 2 [4Fe-4S] clusters per subunit. One cluster is coordinated with 3 cysteines and an exchangeable S-adenosyl-L-methionine.</text>
</comment>
<comment type="pathway">
    <text evidence="1">Protein modification; protein lipoylation via endogenous pathway; protein N(6)-(lipoyl)lysine from octanoyl-[acyl-carrier-protein]: step 2/2.</text>
</comment>
<comment type="subcellular location">
    <subcellularLocation>
        <location evidence="1">Cytoplasm</location>
    </subcellularLocation>
</comment>
<comment type="similarity">
    <text evidence="1">Belongs to the radical SAM superfamily. Lipoyl synthase family.</text>
</comment>
<keyword id="KW-0004">4Fe-4S</keyword>
<keyword id="KW-0963">Cytoplasm</keyword>
<keyword id="KW-0408">Iron</keyword>
<keyword id="KW-0411">Iron-sulfur</keyword>
<keyword id="KW-0479">Metal-binding</keyword>
<keyword id="KW-0949">S-adenosyl-L-methionine</keyword>
<keyword id="KW-0808">Transferase</keyword>
<accession>Q3JWL1</accession>
<evidence type="ECO:0000255" key="1">
    <source>
        <dbReference type="HAMAP-Rule" id="MF_00206"/>
    </source>
</evidence>
<evidence type="ECO:0000255" key="2">
    <source>
        <dbReference type="PROSITE-ProRule" id="PRU01266"/>
    </source>
</evidence>
<evidence type="ECO:0000256" key="3">
    <source>
        <dbReference type="SAM" id="MobiDB-lite"/>
    </source>
</evidence>
<protein>
    <recommendedName>
        <fullName evidence="1">Lipoyl synthase</fullName>
        <ecNumber evidence="1">2.8.1.8</ecNumber>
    </recommendedName>
    <alternativeName>
        <fullName evidence="1">Lip-syn</fullName>
        <shortName evidence="1">LS</shortName>
    </alternativeName>
    <alternativeName>
        <fullName evidence="1">Lipoate synthase</fullName>
    </alternativeName>
    <alternativeName>
        <fullName evidence="1">Lipoic acid synthase</fullName>
    </alternativeName>
    <alternativeName>
        <fullName evidence="1">Sulfur insertion protein LipA</fullName>
    </alternativeName>
</protein>
<proteinExistence type="inferred from homology"/>
<feature type="chain" id="PRO_1000012202" description="Lipoyl synthase">
    <location>
        <begin position="1"/>
        <end position="329"/>
    </location>
</feature>
<feature type="domain" description="Radical SAM core" evidence="2">
    <location>
        <begin position="87"/>
        <end position="305"/>
    </location>
</feature>
<feature type="region of interest" description="Disordered" evidence="3">
    <location>
        <begin position="1"/>
        <end position="23"/>
    </location>
</feature>
<feature type="binding site" evidence="1">
    <location>
        <position position="76"/>
    </location>
    <ligand>
        <name>[4Fe-4S] cluster</name>
        <dbReference type="ChEBI" id="CHEBI:49883"/>
        <label>1</label>
    </ligand>
</feature>
<feature type="binding site" evidence="1">
    <location>
        <position position="81"/>
    </location>
    <ligand>
        <name>[4Fe-4S] cluster</name>
        <dbReference type="ChEBI" id="CHEBI:49883"/>
        <label>1</label>
    </ligand>
</feature>
<feature type="binding site" evidence="1">
    <location>
        <position position="87"/>
    </location>
    <ligand>
        <name>[4Fe-4S] cluster</name>
        <dbReference type="ChEBI" id="CHEBI:49883"/>
        <label>1</label>
    </ligand>
</feature>
<feature type="binding site" evidence="1">
    <location>
        <position position="102"/>
    </location>
    <ligand>
        <name>[4Fe-4S] cluster</name>
        <dbReference type="ChEBI" id="CHEBI:49883"/>
        <label>2</label>
        <note>4Fe-4S-S-AdoMet</note>
    </ligand>
</feature>
<feature type="binding site" evidence="1">
    <location>
        <position position="106"/>
    </location>
    <ligand>
        <name>[4Fe-4S] cluster</name>
        <dbReference type="ChEBI" id="CHEBI:49883"/>
        <label>2</label>
        <note>4Fe-4S-S-AdoMet</note>
    </ligand>
</feature>
<feature type="binding site" evidence="1">
    <location>
        <position position="109"/>
    </location>
    <ligand>
        <name>[4Fe-4S] cluster</name>
        <dbReference type="ChEBI" id="CHEBI:49883"/>
        <label>2</label>
        <note>4Fe-4S-S-AdoMet</note>
    </ligand>
</feature>
<feature type="binding site" evidence="1">
    <location>
        <position position="316"/>
    </location>
    <ligand>
        <name>[4Fe-4S] cluster</name>
        <dbReference type="ChEBI" id="CHEBI:49883"/>
        <label>1</label>
    </ligand>
</feature>
<reference key="1">
    <citation type="journal article" date="2010" name="Genome Biol. Evol.">
        <title>Continuing evolution of Burkholderia mallei through genome reduction and large-scale rearrangements.</title>
        <authorList>
            <person name="Losada L."/>
            <person name="Ronning C.M."/>
            <person name="DeShazer D."/>
            <person name="Woods D."/>
            <person name="Fedorova N."/>
            <person name="Kim H.S."/>
            <person name="Shabalina S.A."/>
            <person name="Pearson T.R."/>
            <person name="Brinkac L."/>
            <person name="Tan P."/>
            <person name="Nandi T."/>
            <person name="Crabtree J."/>
            <person name="Badger J."/>
            <person name="Beckstrom-Sternberg S."/>
            <person name="Saqib M."/>
            <person name="Schutzer S.E."/>
            <person name="Keim P."/>
            <person name="Nierman W.C."/>
        </authorList>
    </citation>
    <scope>NUCLEOTIDE SEQUENCE [LARGE SCALE GENOMIC DNA]</scope>
    <source>
        <strain>1710b</strain>
    </source>
</reference>